<name>PNP_BEII9</name>
<gene>
    <name evidence="1" type="primary">pnp</name>
    <name type="ordered locus">Bind_3192</name>
</gene>
<reference key="1">
    <citation type="journal article" date="2010" name="J. Bacteriol.">
        <title>Complete genome sequence of Beijerinckia indica subsp. indica.</title>
        <authorList>
            <person name="Tamas I."/>
            <person name="Dedysh S.N."/>
            <person name="Liesack W."/>
            <person name="Stott M.B."/>
            <person name="Alam M."/>
            <person name="Murrell J.C."/>
            <person name="Dunfield P.F."/>
        </authorList>
    </citation>
    <scope>NUCLEOTIDE SEQUENCE [LARGE SCALE GENOMIC DNA]</scope>
    <source>
        <strain>ATCC 9039 / DSM 1715 / NCIMB 8712</strain>
    </source>
</reference>
<feature type="chain" id="PRO_0000381866" description="Polyribonucleotide nucleotidyltransferase">
    <location>
        <begin position="1"/>
        <end position="715"/>
    </location>
</feature>
<feature type="domain" description="KH" evidence="1">
    <location>
        <begin position="556"/>
        <end position="615"/>
    </location>
</feature>
<feature type="domain" description="S1 motif" evidence="1">
    <location>
        <begin position="625"/>
        <end position="693"/>
    </location>
</feature>
<feature type="binding site" evidence="1">
    <location>
        <position position="489"/>
    </location>
    <ligand>
        <name>Mg(2+)</name>
        <dbReference type="ChEBI" id="CHEBI:18420"/>
    </ligand>
</feature>
<feature type="binding site" evidence="1">
    <location>
        <position position="495"/>
    </location>
    <ligand>
        <name>Mg(2+)</name>
        <dbReference type="ChEBI" id="CHEBI:18420"/>
    </ligand>
</feature>
<protein>
    <recommendedName>
        <fullName evidence="1">Polyribonucleotide nucleotidyltransferase</fullName>
        <ecNumber evidence="1">2.7.7.8</ecNumber>
    </recommendedName>
    <alternativeName>
        <fullName evidence="1">Polynucleotide phosphorylase</fullName>
        <shortName evidence="1">PNPase</shortName>
    </alternativeName>
</protein>
<organism>
    <name type="scientific">Beijerinckia indica subsp. indica (strain ATCC 9039 / DSM 1715 / NCIMB 8712)</name>
    <dbReference type="NCBI Taxonomy" id="395963"/>
    <lineage>
        <taxon>Bacteria</taxon>
        <taxon>Pseudomonadati</taxon>
        <taxon>Pseudomonadota</taxon>
        <taxon>Alphaproteobacteria</taxon>
        <taxon>Hyphomicrobiales</taxon>
        <taxon>Beijerinckiaceae</taxon>
        <taxon>Beijerinckia</taxon>
    </lineage>
</organism>
<keyword id="KW-0963">Cytoplasm</keyword>
<keyword id="KW-0460">Magnesium</keyword>
<keyword id="KW-0479">Metal-binding</keyword>
<keyword id="KW-0548">Nucleotidyltransferase</keyword>
<keyword id="KW-1185">Reference proteome</keyword>
<keyword id="KW-0694">RNA-binding</keyword>
<keyword id="KW-0808">Transferase</keyword>
<dbReference type="EC" id="2.7.7.8" evidence="1"/>
<dbReference type="EMBL" id="CP001016">
    <property type="protein sequence ID" value="ACB96752.1"/>
    <property type="molecule type" value="Genomic_DNA"/>
</dbReference>
<dbReference type="SMR" id="B2ICY4"/>
<dbReference type="STRING" id="395963.Bind_3192"/>
<dbReference type="KEGG" id="bid:Bind_3192"/>
<dbReference type="eggNOG" id="COG1185">
    <property type="taxonomic scope" value="Bacteria"/>
</dbReference>
<dbReference type="HOGENOM" id="CLU_004217_2_2_5"/>
<dbReference type="Proteomes" id="UP000001695">
    <property type="component" value="Chromosome"/>
</dbReference>
<dbReference type="GO" id="GO:0005829">
    <property type="term" value="C:cytosol"/>
    <property type="evidence" value="ECO:0007669"/>
    <property type="project" value="TreeGrafter"/>
</dbReference>
<dbReference type="GO" id="GO:0000175">
    <property type="term" value="F:3'-5'-RNA exonuclease activity"/>
    <property type="evidence" value="ECO:0007669"/>
    <property type="project" value="TreeGrafter"/>
</dbReference>
<dbReference type="GO" id="GO:0000287">
    <property type="term" value="F:magnesium ion binding"/>
    <property type="evidence" value="ECO:0007669"/>
    <property type="project" value="UniProtKB-UniRule"/>
</dbReference>
<dbReference type="GO" id="GO:0004654">
    <property type="term" value="F:polyribonucleotide nucleotidyltransferase activity"/>
    <property type="evidence" value="ECO:0007669"/>
    <property type="project" value="UniProtKB-UniRule"/>
</dbReference>
<dbReference type="GO" id="GO:0003723">
    <property type="term" value="F:RNA binding"/>
    <property type="evidence" value="ECO:0007669"/>
    <property type="project" value="UniProtKB-UniRule"/>
</dbReference>
<dbReference type="GO" id="GO:0006402">
    <property type="term" value="P:mRNA catabolic process"/>
    <property type="evidence" value="ECO:0007669"/>
    <property type="project" value="UniProtKB-UniRule"/>
</dbReference>
<dbReference type="GO" id="GO:0006396">
    <property type="term" value="P:RNA processing"/>
    <property type="evidence" value="ECO:0007669"/>
    <property type="project" value="InterPro"/>
</dbReference>
<dbReference type="CDD" id="cd02393">
    <property type="entry name" value="KH-I_PNPase"/>
    <property type="match status" value="1"/>
</dbReference>
<dbReference type="CDD" id="cd11363">
    <property type="entry name" value="RNase_PH_PNPase_1"/>
    <property type="match status" value="1"/>
</dbReference>
<dbReference type="CDD" id="cd11364">
    <property type="entry name" value="RNase_PH_PNPase_2"/>
    <property type="match status" value="1"/>
</dbReference>
<dbReference type="CDD" id="cd04472">
    <property type="entry name" value="S1_PNPase"/>
    <property type="match status" value="1"/>
</dbReference>
<dbReference type="FunFam" id="2.40.50.140:FF:000107">
    <property type="entry name" value="Polyribonucleotide nucleotidyltransferase"/>
    <property type="match status" value="1"/>
</dbReference>
<dbReference type="FunFam" id="3.30.1370.10:FF:000001">
    <property type="entry name" value="Polyribonucleotide nucleotidyltransferase"/>
    <property type="match status" value="1"/>
</dbReference>
<dbReference type="FunFam" id="3.30.230.70:FF:000001">
    <property type="entry name" value="Polyribonucleotide nucleotidyltransferase"/>
    <property type="match status" value="1"/>
</dbReference>
<dbReference type="FunFam" id="3.30.230.70:FF:000002">
    <property type="entry name" value="Polyribonucleotide nucleotidyltransferase"/>
    <property type="match status" value="1"/>
</dbReference>
<dbReference type="Gene3D" id="3.30.230.70">
    <property type="entry name" value="GHMP Kinase, N-terminal domain"/>
    <property type="match status" value="2"/>
</dbReference>
<dbReference type="Gene3D" id="3.30.1370.10">
    <property type="entry name" value="K Homology domain, type 1"/>
    <property type="match status" value="1"/>
</dbReference>
<dbReference type="Gene3D" id="2.40.50.140">
    <property type="entry name" value="Nucleic acid-binding proteins"/>
    <property type="match status" value="1"/>
</dbReference>
<dbReference type="HAMAP" id="MF_01595">
    <property type="entry name" value="PNPase"/>
    <property type="match status" value="1"/>
</dbReference>
<dbReference type="InterPro" id="IPR001247">
    <property type="entry name" value="ExoRNase_PH_dom1"/>
</dbReference>
<dbReference type="InterPro" id="IPR015847">
    <property type="entry name" value="ExoRNase_PH_dom2"/>
</dbReference>
<dbReference type="InterPro" id="IPR036345">
    <property type="entry name" value="ExoRNase_PH_dom2_sf"/>
</dbReference>
<dbReference type="InterPro" id="IPR004087">
    <property type="entry name" value="KH_dom"/>
</dbReference>
<dbReference type="InterPro" id="IPR004088">
    <property type="entry name" value="KH_dom_type_1"/>
</dbReference>
<dbReference type="InterPro" id="IPR036612">
    <property type="entry name" value="KH_dom_type_1_sf"/>
</dbReference>
<dbReference type="InterPro" id="IPR012340">
    <property type="entry name" value="NA-bd_OB-fold"/>
</dbReference>
<dbReference type="InterPro" id="IPR012162">
    <property type="entry name" value="PNPase"/>
</dbReference>
<dbReference type="InterPro" id="IPR027408">
    <property type="entry name" value="PNPase/RNase_PH_dom_sf"/>
</dbReference>
<dbReference type="InterPro" id="IPR015848">
    <property type="entry name" value="PNPase_PH_RNA-bd_bac/org-type"/>
</dbReference>
<dbReference type="InterPro" id="IPR020568">
    <property type="entry name" value="Ribosomal_Su5_D2-typ_SF"/>
</dbReference>
<dbReference type="InterPro" id="IPR003029">
    <property type="entry name" value="S1_domain"/>
</dbReference>
<dbReference type="NCBIfam" id="TIGR03591">
    <property type="entry name" value="polynuc_phos"/>
    <property type="match status" value="1"/>
</dbReference>
<dbReference type="NCBIfam" id="NF008805">
    <property type="entry name" value="PRK11824.1"/>
    <property type="match status" value="1"/>
</dbReference>
<dbReference type="PANTHER" id="PTHR11252">
    <property type="entry name" value="POLYRIBONUCLEOTIDE NUCLEOTIDYLTRANSFERASE"/>
    <property type="match status" value="1"/>
</dbReference>
<dbReference type="PANTHER" id="PTHR11252:SF0">
    <property type="entry name" value="POLYRIBONUCLEOTIDE NUCLEOTIDYLTRANSFERASE 1, MITOCHONDRIAL"/>
    <property type="match status" value="1"/>
</dbReference>
<dbReference type="Pfam" id="PF00013">
    <property type="entry name" value="KH_1"/>
    <property type="match status" value="1"/>
</dbReference>
<dbReference type="Pfam" id="PF03726">
    <property type="entry name" value="PNPase"/>
    <property type="match status" value="1"/>
</dbReference>
<dbReference type="Pfam" id="PF01138">
    <property type="entry name" value="RNase_PH"/>
    <property type="match status" value="2"/>
</dbReference>
<dbReference type="Pfam" id="PF03725">
    <property type="entry name" value="RNase_PH_C"/>
    <property type="match status" value="1"/>
</dbReference>
<dbReference type="Pfam" id="PF00575">
    <property type="entry name" value="S1"/>
    <property type="match status" value="1"/>
</dbReference>
<dbReference type="PIRSF" id="PIRSF005499">
    <property type="entry name" value="PNPase"/>
    <property type="match status" value="1"/>
</dbReference>
<dbReference type="SMART" id="SM00322">
    <property type="entry name" value="KH"/>
    <property type="match status" value="1"/>
</dbReference>
<dbReference type="SMART" id="SM00316">
    <property type="entry name" value="S1"/>
    <property type="match status" value="1"/>
</dbReference>
<dbReference type="SUPFAM" id="SSF54791">
    <property type="entry name" value="Eukaryotic type KH-domain (KH-domain type I)"/>
    <property type="match status" value="1"/>
</dbReference>
<dbReference type="SUPFAM" id="SSF50249">
    <property type="entry name" value="Nucleic acid-binding proteins"/>
    <property type="match status" value="1"/>
</dbReference>
<dbReference type="SUPFAM" id="SSF55666">
    <property type="entry name" value="Ribonuclease PH domain 2-like"/>
    <property type="match status" value="2"/>
</dbReference>
<dbReference type="SUPFAM" id="SSF54211">
    <property type="entry name" value="Ribosomal protein S5 domain 2-like"/>
    <property type="match status" value="2"/>
</dbReference>
<dbReference type="PROSITE" id="PS50084">
    <property type="entry name" value="KH_TYPE_1"/>
    <property type="match status" value="1"/>
</dbReference>
<dbReference type="PROSITE" id="PS50126">
    <property type="entry name" value="S1"/>
    <property type="match status" value="1"/>
</dbReference>
<sequence>MHMFEIHREEIEWAGRKLVLETGKIARQADGAIFATYGETTVLATVVSAKSVKPGVDFFPLTVNYQEKAFAAGRIPGGYFKREGRPSERETLVSRLIDRPIRPLFPEGYRNETQVIVTVLAHDLENDPDILSMVASSAALTLSGVPFMGPVGAARVAYVNGQYKINPTLDEVKDTALDLVVAGTSDAVLMVESEAKELSEDVMLGAVMAGHSSFQPVIDAIIRLAEKAAKEPRDLILPDKTEVEVAVLAIAENDLREAYKITSKQDRYAAVDAVKAKVFGDLLPAEGEAKFPKDLVAEVFHDLQAKVVRWNILDNGIRIDGRDVKTVRPILAEVGILPRAHGSALFTRGETQALVVATLGTGEDEQLIDNLEGTYRERFLLHYNFPPYSVGEAGRMGSPGRREIGHGKLAWRAIHPMLPTPAEFPYTIRVVSEITESNGSSSMATVCGSSLALMDAGVPLKRPTAGIAMGLILEGERYAVLSDILGDEDHLGDMDFKVAGTEEGITSLQMDIKITGINEEIMRVALGQAKEGRLHILGEMAKAITGARAELGEFAPRIETLRIPTEKIREVIGTGGKVIREICEKTGAKINIEDDGTVKVASSDGNSIKAAINWIKSIATDPEVGHIYDGTVVKVVDFGAFVNFFGSKDGLVHISQLAKGRVAKTSDVVKEGDKVKVKLLGFDDRGKVRLSMRLVDQETGEDLEGKEPPQAEAGE</sequence>
<evidence type="ECO:0000255" key="1">
    <source>
        <dbReference type="HAMAP-Rule" id="MF_01595"/>
    </source>
</evidence>
<proteinExistence type="inferred from homology"/>
<comment type="function">
    <text evidence="1">Involved in mRNA degradation. Catalyzes the phosphorolysis of single-stranded polyribonucleotides processively in the 3'- to 5'-direction.</text>
</comment>
<comment type="catalytic activity">
    <reaction evidence="1">
        <text>RNA(n+1) + phosphate = RNA(n) + a ribonucleoside 5'-diphosphate</text>
        <dbReference type="Rhea" id="RHEA:22096"/>
        <dbReference type="Rhea" id="RHEA-COMP:14527"/>
        <dbReference type="Rhea" id="RHEA-COMP:17342"/>
        <dbReference type="ChEBI" id="CHEBI:43474"/>
        <dbReference type="ChEBI" id="CHEBI:57930"/>
        <dbReference type="ChEBI" id="CHEBI:140395"/>
        <dbReference type="EC" id="2.7.7.8"/>
    </reaction>
</comment>
<comment type="cofactor">
    <cofactor evidence="1">
        <name>Mg(2+)</name>
        <dbReference type="ChEBI" id="CHEBI:18420"/>
    </cofactor>
</comment>
<comment type="subcellular location">
    <subcellularLocation>
        <location evidence="1">Cytoplasm</location>
    </subcellularLocation>
</comment>
<comment type="similarity">
    <text evidence="1">Belongs to the polyribonucleotide nucleotidyltransferase family.</text>
</comment>
<accession>B2ICY4</accession>